<evidence type="ECO:0000255" key="1">
    <source>
        <dbReference type="HAMAP-Rule" id="MF_01526"/>
    </source>
</evidence>
<accession>C1KXH8</accession>
<organism>
    <name type="scientific">Listeria monocytogenes serotype 4b (strain CLIP80459)</name>
    <dbReference type="NCBI Taxonomy" id="568819"/>
    <lineage>
        <taxon>Bacteria</taxon>
        <taxon>Bacillati</taxon>
        <taxon>Bacillota</taxon>
        <taxon>Bacilli</taxon>
        <taxon>Bacillales</taxon>
        <taxon>Listeriaceae</taxon>
        <taxon>Listeria</taxon>
    </lineage>
</organism>
<protein>
    <recommendedName>
        <fullName evidence="1">UPF0342 protein Lm4b_02250</fullName>
    </recommendedName>
</protein>
<reference key="1">
    <citation type="journal article" date="2012" name="BMC Genomics">
        <title>Comparative genomics and transcriptomics of lineages I, II, and III strains of Listeria monocytogenes.</title>
        <authorList>
            <person name="Hain T."/>
            <person name="Ghai R."/>
            <person name="Billion A."/>
            <person name="Kuenne C.T."/>
            <person name="Steinweg C."/>
            <person name="Izar B."/>
            <person name="Mohamed W."/>
            <person name="Mraheil M."/>
            <person name="Domann E."/>
            <person name="Schaffrath S."/>
            <person name="Karst U."/>
            <person name="Goesmann A."/>
            <person name="Oehm S."/>
            <person name="Puhler A."/>
            <person name="Merkl R."/>
            <person name="Vorwerk S."/>
            <person name="Glaser P."/>
            <person name="Garrido P."/>
            <person name="Rusniok C."/>
            <person name="Buchrieser C."/>
            <person name="Goebel W."/>
            <person name="Chakraborty T."/>
        </authorList>
    </citation>
    <scope>NUCLEOTIDE SEQUENCE [LARGE SCALE GENOMIC DNA]</scope>
    <source>
        <strain>CLIP80459</strain>
    </source>
</reference>
<feature type="chain" id="PRO_1000215383" description="UPF0342 protein Lm4b_02250">
    <location>
        <begin position="1"/>
        <end position="117"/>
    </location>
</feature>
<proteinExistence type="inferred from homology"/>
<gene>
    <name type="ordered locus">Lm4b_02250</name>
</gene>
<comment type="similarity">
    <text evidence="1">Belongs to the UPF0342 family.</text>
</comment>
<dbReference type="EMBL" id="FM242711">
    <property type="protein sequence ID" value="CAS06007.1"/>
    <property type="molecule type" value="Genomic_DNA"/>
</dbReference>
<dbReference type="RefSeq" id="WP_003723354.1">
    <property type="nucleotide sequence ID" value="NC_012488.1"/>
</dbReference>
<dbReference type="SMR" id="C1KXH8"/>
<dbReference type="KEGG" id="lmc:Lm4b_02250"/>
<dbReference type="HOGENOM" id="CLU_140243_3_0_9"/>
<dbReference type="Gene3D" id="1.20.1500.10">
    <property type="entry name" value="YheA/YmcA-like"/>
    <property type="match status" value="1"/>
</dbReference>
<dbReference type="HAMAP" id="MF_01526">
    <property type="entry name" value="UPF0342"/>
    <property type="match status" value="1"/>
</dbReference>
<dbReference type="InterPro" id="IPR010368">
    <property type="entry name" value="Com_YlbF"/>
</dbReference>
<dbReference type="InterPro" id="IPR023378">
    <property type="entry name" value="YheA/YmcA-like_dom_sf"/>
</dbReference>
<dbReference type="NCBIfam" id="NF010210">
    <property type="entry name" value="PRK13676.1-2"/>
    <property type="match status" value="1"/>
</dbReference>
<dbReference type="Pfam" id="PF06133">
    <property type="entry name" value="Com_YlbF"/>
    <property type="match status" value="1"/>
</dbReference>
<dbReference type="SUPFAM" id="SSF158622">
    <property type="entry name" value="YheA/YmcA-like"/>
    <property type="match status" value="1"/>
</dbReference>
<name>Y2250_LISMC</name>
<sequence>MAVNIYDLAHDLDKGIRETPEFISLQDAYREVNENADAKAKFERFRDVQVTIQEKQMTGQEIDDETVDVAQQVAQEVQENELIVKLMEKEQAMSTIINDLNRIIMTPLQDLYNVAND</sequence>